<feature type="chain" id="PRO_1000075483" description="Peptide chain release factor 1">
    <location>
        <begin position="1"/>
        <end position="358"/>
    </location>
</feature>
<feature type="region of interest" description="Disordered" evidence="2">
    <location>
        <begin position="284"/>
        <end position="309"/>
    </location>
</feature>
<feature type="modified residue" description="N5-methylglutamine" evidence="1">
    <location>
        <position position="235"/>
    </location>
</feature>
<reference key="1">
    <citation type="journal article" date="2007" name="Nat. Genet.">
        <title>Genomic analysis of Bartonella identifies type IV secretion systems as host adaptability factors.</title>
        <authorList>
            <person name="Saenz H.L."/>
            <person name="Engel P."/>
            <person name="Stoeckli M.C."/>
            <person name="Lanz C."/>
            <person name="Raddatz G."/>
            <person name="Vayssier-Taussat M."/>
            <person name="Birtles R."/>
            <person name="Schuster S.C."/>
            <person name="Dehio C."/>
        </authorList>
    </citation>
    <scope>NUCLEOTIDE SEQUENCE [LARGE SCALE GENOMIC DNA]</scope>
    <source>
        <strain>CIP 105476 / IBS 506</strain>
    </source>
</reference>
<protein>
    <recommendedName>
        <fullName evidence="1">Peptide chain release factor 1</fullName>
        <shortName evidence="1">RF-1</shortName>
    </recommendedName>
</protein>
<name>RF1_BART1</name>
<dbReference type="EMBL" id="AM260525">
    <property type="protein sequence ID" value="CAK00695.1"/>
    <property type="molecule type" value="Genomic_DNA"/>
</dbReference>
<dbReference type="RefSeq" id="WP_012230607.1">
    <property type="nucleotide sequence ID" value="NC_010161.1"/>
</dbReference>
<dbReference type="SMR" id="A9IMM3"/>
<dbReference type="KEGG" id="btr:BT_0215"/>
<dbReference type="eggNOG" id="COG0216">
    <property type="taxonomic scope" value="Bacteria"/>
</dbReference>
<dbReference type="HOGENOM" id="CLU_036856_0_1_5"/>
<dbReference type="Proteomes" id="UP000001592">
    <property type="component" value="Chromosome"/>
</dbReference>
<dbReference type="GO" id="GO:0005737">
    <property type="term" value="C:cytoplasm"/>
    <property type="evidence" value="ECO:0007669"/>
    <property type="project" value="UniProtKB-SubCell"/>
</dbReference>
<dbReference type="GO" id="GO:0016149">
    <property type="term" value="F:translation release factor activity, codon specific"/>
    <property type="evidence" value="ECO:0007669"/>
    <property type="project" value="UniProtKB-UniRule"/>
</dbReference>
<dbReference type="FunFam" id="3.30.160.20:FF:000004">
    <property type="entry name" value="Peptide chain release factor 1"/>
    <property type="match status" value="1"/>
</dbReference>
<dbReference type="FunFam" id="3.30.70.1660:FF:000002">
    <property type="entry name" value="Peptide chain release factor 1"/>
    <property type="match status" value="1"/>
</dbReference>
<dbReference type="FunFam" id="3.30.70.1660:FF:000004">
    <property type="entry name" value="Peptide chain release factor 1"/>
    <property type="match status" value="1"/>
</dbReference>
<dbReference type="Gene3D" id="3.30.160.20">
    <property type="match status" value="1"/>
</dbReference>
<dbReference type="Gene3D" id="3.30.70.1660">
    <property type="match status" value="2"/>
</dbReference>
<dbReference type="Gene3D" id="6.10.140.1950">
    <property type="match status" value="1"/>
</dbReference>
<dbReference type="HAMAP" id="MF_00093">
    <property type="entry name" value="Rel_fac_1"/>
    <property type="match status" value="1"/>
</dbReference>
<dbReference type="InterPro" id="IPR005139">
    <property type="entry name" value="PCRF"/>
</dbReference>
<dbReference type="InterPro" id="IPR000352">
    <property type="entry name" value="Pep_chain_release_fac_I"/>
</dbReference>
<dbReference type="InterPro" id="IPR045853">
    <property type="entry name" value="Pep_chain_release_fac_I_sf"/>
</dbReference>
<dbReference type="InterPro" id="IPR050057">
    <property type="entry name" value="Prokaryotic/Mito_RF"/>
</dbReference>
<dbReference type="InterPro" id="IPR004373">
    <property type="entry name" value="RF-1"/>
</dbReference>
<dbReference type="NCBIfam" id="TIGR00019">
    <property type="entry name" value="prfA"/>
    <property type="match status" value="1"/>
</dbReference>
<dbReference type="NCBIfam" id="NF001859">
    <property type="entry name" value="PRK00591.1"/>
    <property type="match status" value="1"/>
</dbReference>
<dbReference type="PANTHER" id="PTHR43804">
    <property type="entry name" value="LD18447P"/>
    <property type="match status" value="1"/>
</dbReference>
<dbReference type="PANTHER" id="PTHR43804:SF7">
    <property type="entry name" value="LD18447P"/>
    <property type="match status" value="1"/>
</dbReference>
<dbReference type="Pfam" id="PF03462">
    <property type="entry name" value="PCRF"/>
    <property type="match status" value="1"/>
</dbReference>
<dbReference type="Pfam" id="PF00472">
    <property type="entry name" value="RF-1"/>
    <property type="match status" value="1"/>
</dbReference>
<dbReference type="SMART" id="SM00937">
    <property type="entry name" value="PCRF"/>
    <property type="match status" value="1"/>
</dbReference>
<dbReference type="SUPFAM" id="SSF75620">
    <property type="entry name" value="Release factor"/>
    <property type="match status" value="1"/>
</dbReference>
<dbReference type="PROSITE" id="PS00745">
    <property type="entry name" value="RF_PROK_I"/>
    <property type="match status" value="1"/>
</dbReference>
<sequence>MVSLPQDRIKQLEKRFEIIESQMTTNPNAETYVKLASEYAELQPVIASIRALNALYGEITELETIINDKQTDIEMRHLAQEELPSLHKKVEQLEKELQILLLPKDVADEKSAIVEIRAGTGGSEAALFSGDLFRMYERYAHAHHWKVEVISLSEGEVGGYKEIIATISGKGVFSKLKYESGVHRVQRIPETETGGRIHTSAATVAVLPEAEEIDIDIRPEDIRIDTMRASGAGGQHVNTTDSAVRITHIPTGIMVVQAEKSQHQNRARALQILRARLFDIERQKVESERSASRKSQVGSGDRSERIRTYNFPQGRVTDHRINLTLYKLDRILEGDLDEIIHALISDHQTALLMEMDNN</sequence>
<accession>A9IMM3</accession>
<organism>
    <name type="scientific">Bartonella tribocorum (strain CIP 105476 / IBS 506)</name>
    <dbReference type="NCBI Taxonomy" id="382640"/>
    <lineage>
        <taxon>Bacteria</taxon>
        <taxon>Pseudomonadati</taxon>
        <taxon>Pseudomonadota</taxon>
        <taxon>Alphaproteobacteria</taxon>
        <taxon>Hyphomicrobiales</taxon>
        <taxon>Bartonellaceae</taxon>
        <taxon>Bartonella</taxon>
    </lineage>
</organism>
<evidence type="ECO:0000255" key="1">
    <source>
        <dbReference type="HAMAP-Rule" id="MF_00093"/>
    </source>
</evidence>
<evidence type="ECO:0000256" key="2">
    <source>
        <dbReference type="SAM" id="MobiDB-lite"/>
    </source>
</evidence>
<proteinExistence type="inferred from homology"/>
<keyword id="KW-0963">Cytoplasm</keyword>
<keyword id="KW-0488">Methylation</keyword>
<keyword id="KW-0648">Protein biosynthesis</keyword>
<gene>
    <name evidence="1" type="primary">prfA</name>
    <name type="ordered locus">BT_0215</name>
</gene>
<comment type="function">
    <text evidence="1">Peptide chain release factor 1 directs the termination of translation in response to the peptide chain termination codons UAG and UAA.</text>
</comment>
<comment type="subcellular location">
    <subcellularLocation>
        <location evidence="1">Cytoplasm</location>
    </subcellularLocation>
</comment>
<comment type="PTM">
    <text evidence="1">Methylated by PrmC. Methylation increases the termination efficiency of RF1.</text>
</comment>
<comment type="similarity">
    <text evidence="1">Belongs to the prokaryotic/mitochondrial release factor family.</text>
</comment>